<feature type="signal peptide" evidence="1">
    <location>
        <begin position="1"/>
        <end position="25"/>
    </location>
</feature>
<feature type="chain" id="PRO_0000418260" description="Uncharacterized protein UL147A">
    <location>
        <begin position="26"/>
        <end position="75"/>
    </location>
</feature>
<feature type="transmembrane region" description="Helical" evidence="1">
    <location>
        <begin position="55"/>
        <end position="75"/>
    </location>
</feature>
<proteinExistence type="inferred from homology"/>
<keyword id="KW-1038">Host endoplasmic reticulum</keyword>
<keyword id="KW-1043">Host membrane</keyword>
<keyword id="KW-0945">Host-virus interaction</keyword>
<keyword id="KW-1090">Inhibition of host innate immune response by virus</keyword>
<keyword id="KW-0472">Membrane</keyword>
<keyword id="KW-1185">Reference proteome</keyword>
<keyword id="KW-0732">Signal</keyword>
<keyword id="KW-0812">Transmembrane</keyword>
<keyword id="KW-1133">Transmembrane helix</keyword>
<keyword id="KW-0899">Viral immunoevasion</keyword>
<comment type="function">
    <text evidence="2">Plays a role in the down-regulation of the host NKG2D ligand MICA by targeting ER-resident MICA to proteasomal degradation prior to the GPI-anchoring step. In turn, MICA reduction diminishes NK-cell killing of HCMV-infected cells.</text>
</comment>
<comment type="subcellular location">
    <subcellularLocation>
        <location evidence="2">Host endoplasmic reticulum membrane</location>
        <topology evidence="3">Single-pass membrane protein</topology>
    </subcellularLocation>
</comment>
<organismHost>
    <name type="scientific">Homo sapiens</name>
    <name type="common">Human</name>
    <dbReference type="NCBI Taxonomy" id="9606"/>
</organismHost>
<name>U147A_HCMVM</name>
<reference key="1">
    <citation type="journal article" date="2004" name="J. Gen. Virol.">
        <title>Genetic content of wild-type human cytomegalovirus.</title>
        <authorList>
            <person name="Dolan A."/>
            <person name="Cunningham C."/>
            <person name="Hector R.D."/>
            <person name="Hassan-Walker A.F."/>
            <person name="Lee L."/>
            <person name="Addison C."/>
            <person name="Dargan D.J."/>
            <person name="McGeoch D.J."/>
            <person name="Gatherer D."/>
            <person name="Emery V.C."/>
            <person name="Griffiths P.D."/>
            <person name="Sinzger C."/>
            <person name="McSharry B.P."/>
            <person name="Wilkinson G.W.G."/>
            <person name="Davison A.J."/>
        </authorList>
    </citation>
    <scope>NUCLEOTIDE SEQUENCE [LARGE SCALE GENOMIC DNA]</scope>
</reference>
<reference key="2">
    <citation type="journal article" date="2021" name="PLoS Pathog.">
        <title>The human cytomegalovirus protein UL147A downregulates the most prevalent MICA allele: MICA*008, to evade NK cell-mediated killing.</title>
        <authorList>
            <person name="Seidel E."/>
            <person name="Dassa L."/>
            <person name="Schuler C."/>
            <person name="Oiknine-Djian E."/>
            <person name="Wolf D.G."/>
            <person name="Le-Trilling V.T.K."/>
            <person name="Mandelboim O."/>
        </authorList>
    </citation>
    <scope>FUNCTION</scope>
    <scope>SUBCELLULAR LOCATION</scope>
</reference>
<gene>
    <name type="primary">UL147A</name>
</gene>
<protein>
    <recommendedName>
        <fullName>Uncharacterized protein UL147A</fullName>
    </recommendedName>
</protein>
<accession>F5H8R0</accession>
<sequence>MSLFYRAVALGTLSALVWYSTSILAEINENSCSSSSVDHEDCEEPDEIVREEQDYRALLAFSLVICGTLLVTCVI</sequence>
<evidence type="ECO:0000255" key="1"/>
<evidence type="ECO:0000269" key="2">
    <source>
    </source>
</evidence>
<evidence type="ECO:0000305" key="3"/>
<organism>
    <name type="scientific">Human cytomegalovirus (strain Merlin)</name>
    <name type="common">HHV-5</name>
    <name type="synonym">Human herpesvirus 5</name>
    <dbReference type="NCBI Taxonomy" id="295027"/>
    <lineage>
        <taxon>Viruses</taxon>
        <taxon>Duplodnaviria</taxon>
        <taxon>Heunggongvirae</taxon>
        <taxon>Peploviricota</taxon>
        <taxon>Herviviricetes</taxon>
        <taxon>Herpesvirales</taxon>
        <taxon>Orthoherpesviridae</taxon>
        <taxon>Betaherpesvirinae</taxon>
        <taxon>Cytomegalovirus</taxon>
        <taxon>Cytomegalovirus humanbeta5</taxon>
        <taxon>Human cytomegalovirus</taxon>
    </lineage>
</organism>
<dbReference type="EMBL" id="AY446894">
    <property type="protein sequence ID" value="AAR31673.1"/>
    <property type="molecule type" value="Genomic_DNA"/>
</dbReference>
<dbReference type="RefSeq" id="YP_081569.1">
    <property type="nucleotide sequence ID" value="NC_006273.2"/>
</dbReference>
<dbReference type="SMR" id="F5H8R0"/>
<dbReference type="DNASU" id="3077569"/>
<dbReference type="GeneID" id="3077569"/>
<dbReference type="KEGG" id="vg:3077569"/>
<dbReference type="Reactome" id="R-HSA-9610379">
    <property type="pathway name" value="HCMV Late Events"/>
</dbReference>
<dbReference type="Proteomes" id="UP000000938">
    <property type="component" value="Segment"/>
</dbReference>
<dbReference type="GO" id="GO:0044167">
    <property type="term" value="C:host cell endoplasmic reticulum membrane"/>
    <property type="evidence" value="ECO:0007669"/>
    <property type="project" value="UniProtKB-SubCell"/>
</dbReference>
<dbReference type="GO" id="GO:0016020">
    <property type="term" value="C:membrane"/>
    <property type="evidence" value="ECO:0007669"/>
    <property type="project" value="UniProtKB-KW"/>
</dbReference>
<dbReference type="GO" id="GO:0052170">
    <property type="term" value="P:symbiont-mediated suppression of host innate immune response"/>
    <property type="evidence" value="ECO:0007669"/>
    <property type="project" value="UniProtKB-KW"/>
</dbReference>